<evidence type="ECO:0000250" key="1"/>
<evidence type="ECO:0000255" key="2">
    <source>
        <dbReference type="HAMAP-Rule" id="MF_01441"/>
    </source>
</evidence>
<dbReference type="EC" id="1.16.-.-" evidence="2"/>
<dbReference type="EMBL" id="AE014613">
    <property type="protein sequence ID" value="AAO69680.1"/>
    <property type="molecule type" value="Genomic_DNA"/>
</dbReference>
<dbReference type="EMBL" id="AL513382">
    <property type="protein sequence ID" value="CAD05278.1"/>
    <property type="molecule type" value="Genomic_DNA"/>
</dbReference>
<dbReference type="RefSeq" id="NP_455366.1">
    <property type="nucleotide sequence ID" value="NC_003198.1"/>
</dbReference>
<dbReference type="RefSeq" id="WP_000100805.1">
    <property type="nucleotide sequence ID" value="NZ_WSUR01000021.1"/>
</dbReference>
<dbReference type="SMR" id="Q8XF78"/>
<dbReference type="STRING" id="220341.gene:17584868"/>
<dbReference type="KEGG" id="stt:t2057"/>
<dbReference type="KEGG" id="sty:STY0870"/>
<dbReference type="PATRIC" id="fig|220341.7.peg.876"/>
<dbReference type="eggNOG" id="COG0783">
    <property type="taxonomic scope" value="Bacteria"/>
</dbReference>
<dbReference type="HOGENOM" id="CLU_098183_1_2_6"/>
<dbReference type="OMA" id="WDDYSIG"/>
<dbReference type="OrthoDB" id="9797687at2"/>
<dbReference type="Proteomes" id="UP000000541">
    <property type="component" value="Chromosome"/>
</dbReference>
<dbReference type="Proteomes" id="UP000002670">
    <property type="component" value="Chromosome"/>
</dbReference>
<dbReference type="GO" id="GO:0005737">
    <property type="term" value="C:cytoplasm"/>
    <property type="evidence" value="ECO:0007669"/>
    <property type="project" value="UniProtKB-SubCell"/>
</dbReference>
<dbReference type="GO" id="GO:0003677">
    <property type="term" value="F:DNA binding"/>
    <property type="evidence" value="ECO:0007669"/>
    <property type="project" value="UniProtKB-UniRule"/>
</dbReference>
<dbReference type="GO" id="GO:0008199">
    <property type="term" value="F:ferric iron binding"/>
    <property type="evidence" value="ECO:0007669"/>
    <property type="project" value="UniProtKB-UniRule"/>
</dbReference>
<dbReference type="GO" id="GO:0016722">
    <property type="term" value="F:oxidoreductase activity, acting on metal ions"/>
    <property type="evidence" value="ECO:0007669"/>
    <property type="project" value="InterPro"/>
</dbReference>
<dbReference type="GO" id="GO:0030261">
    <property type="term" value="P:chromosome condensation"/>
    <property type="evidence" value="ECO:0007669"/>
    <property type="project" value="UniProtKB-KW"/>
</dbReference>
<dbReference type="GO" id="GO:0006879">
    <property type="term" value="P:intracellular iron ion homeostasis"/>
    <property type="evidence" value="ECO:0007669"/>
    <property type="project" value="UniProtKB-KW"/>
</dbReference>
<dbReference type="CDD" id="cd01043">
    <property type="entry name" value="DPS"/>
    <property type="match status" value="1"/>
</dbReference>
<dbReference type="FunFam" id="1.20.1260.10:FF:000003">
    <property type="entry name" value="DNA protection during starvation protein"/>
    <property type="match status" value="1"/>
</dbReference>
<dbReference type="Gene3D" id="1.20.1260.10">
    <property type="match status" value="1"/>
</dbReference>
<dbReference type="HAMAP" id="MF_01441">
    <property type="entry name" value="Dps"/>
    <property type="match status" value="1"/>
</dbReference>
<dbReference type="InterPro" id="IPR002177">
    <property type="entry name" value="DPS_DNA-bd"/>
</dbReference>
<dbReference type="InterPro" id="IPR023188">
    <property type="entry name" value="DPS_DNA-bd_CS"/>
</dbReference>
<dbReference type="InterPro" id="IPR023067">
    <property type="entry name" value="Dps_gammaproteobac"/>
</dbReference>
<dbReference type="InterPro" id="IPR012347">
    <property type="entry name" value="Ferritin-like"/>
</dbReference>
<dbReference type="InterPro" id="IPR009078">
    <property type="entry name" value="Ferritin-like_SF"/>
</dbReference>
<dbReference type="InterPro" id="IPR008331">
    <property type="entry name" value="Ferritin_DPS_dom"/>
</dbReference>
<dbReference type="NCBIfam" id="NF006975">
    <property type="entry name" value="PRK09448.1"/>
    <property type="match status" value="1"/>
</dbReference>
<dbReference type="PANTHER" id="PTHR42932:SF3">
    <property type="entry name" value="DNA PROTECTION DURING STARVATION PROTEIN"/>
    <property type="match status" value="1"/>
</dbReference>
<dbReference type="PANTHER" id="PTHR42932">
    <property type="entry name" value="GENERAL STRESS PROTEIN 20U"/>
    <property type="match status" value="1"/>
</dbReference>
<dbReference type="Pfam" id="PF00210">
    <property type="entry name" value="Ferritin"/>
    <property type="match status" value="1"/>
</dbReference>
<dbReference type="PIRSF" id="PIRSF005900">
    <property type="entry name" value="Dps"/>
    <property type="match status" value="1"/>
</dbReference>
<dbReference type="PRINTS" id="PR01346">
    <property type="entry name" value="HELNAPAPROT"/>
</dbReference>
<dbReference type="SUPFAM" id="SSF47240">
    <property type="entry name" value="Ferritin-like"/>
    <property type="match status" value="1"/>
</dbReference>
<dbReference type="PROSITE" id="PS00818">
    <property type="entry name" value="DPS_1"/>
    <property type="match status" value="1"/>
</dbReference>
<dbReference type="PROSITE" id="PS00819">
    <property type="entry name" value="DPS_2"/>
    <property type="match status" value="1"/>
</dbReference>
<name>DPS_SALTI</name>
<protein>
    <recommendedName>
        <fullName evidence="2">DNA protection during starvation protein</fullName>
        <ecNumber evidence="2">1.16.-.-</ecNumber>
    </recommendedName>
</protein>
<accession>Q8XF78</accession>
<accession>Q7AN96</accession>
<sequence>MSTAKLVKTKASNLLYTRNDVSESDKKATVELLNRQVIQFIDLSLITKQAHWNMRGANFIAVHEMLDGFRTALTDHLDTMAERAVQLGGVALGTTQVINSKTPLKSYPLDIHNVQDHLKELADRYAVVANDVRKAIGEAKDEDTADIFTAASRDLDKFLWFIESNIE</sequence>
<proteinExistence type="inferred from homology"/>
<reference key="1">
    <citation type="journal article" date="2003" name="J. Bacteriol.">
        <title>Comparative genomics of Salmonella enterica serovar Typhi strains Ty2 and CT18.</title>
        <authorList>
            <person name="Deng W."/>
            <person name="Liou S.-R."/>
            <person name="Plunkett G. III"/>
            <person name="Mayhew G.F."/>
            <person name="Rose D.J."/>
            <person name="Burland V."/>
            <person name="Kodoyianni V."/>
            <person name="Schwartz D.C."/>
            <person name="Blattner F.R."/>
        </authorList>
    </citation>
    <scope>NUCLEOTIDE SEQUENCE [LARGE SCALE GENOMIC DNA]</scope>
    <source>
        <strain>ATCC 700931 / Ty2</strain>
    </source>
</reference>
<reference key="2">
    <citation type="journal article" date="2001" name="Nature">
        <title>Complete genome sequence of a multiple drug resistant Salmonella enterica serovar Typhi CT18.</title>
        <authorList>
            <person name="Parkhill J."/>
            <person name="Dougan G."/>
            <person name="James K.D."/>
            <person name="Thomson N.R."/>
            <person name="Pickard D."/>
            <person name="Wain J."/>
            <person name="Churcher C.M."/>
            <person name="Mungall K.L."/>
            <person name="Bentley S.D."/>
            <person name="Holden M.T.G."/>
            <person name="Sebaihia M."/>
            <person name="Baker S."/>
            <person name="Basham D."/>
            <person name="Brooks K."/>
            <person name="Chillingworth T."/>
            <person name="Connerton P."/>
            <person name="Cronin A."/>
            <person name="Davis P."/>
            <person name="Davies R.M."/>
            <person name="Dowd L."/>
            <person name="White N."/>
            <person name="Farrar J."/>
            <person name="Feltwell T."/>
            <person name="Hamlin N."/>
            <person name="Haque A."/>
            <person name="Hien T.T."/>
            <person name="Holroyd S."/>
            <person name="Jagels K."/>
            <person name="Krogh A."/>
            <person name="Larsen T.S."/>
            <person name="Leather S."/>
            <person name="Moule S."/>
            <person name="O'Gaora P."/>
            <person name="Parry C."/>
            <person name="Quail M.A."/>
            <person name="Rutherford K.M."/>
            <person name="Simmonds M."/>
            <person name="Skelton J."/>
            <person name="Stevens K."/>
            <person name="Whitehead S."/>
            <person name="Barrell B.G."/>
        </authorList>
    </citation>
    <scope>NUCLEOTIDE SEQUENCE [LARGE SCALE GENOMIC DNA]</scope>
    <source>
        <strain>CT18</strain>
    </source>
</reference>
<organism>
    <name type="scientific">Salmonella typhi</name>
    <dbReference type="NCBI Taxonomy" id="90370"/>
    <lineage>
        <taxon>Bacteria</taxon>
        <taxon>Pseudomonadati</taxon>
        <taxon>Pseudomonadota</taxon>
        <taxon>Gammaproteobacteria</taxon>
        <taxon>Enterobacterales</taxon>
        <taxon>Enterobacteriaceae</taxon>
        <taxon>Salmonella</taxon>
    </lineage>
</organism>
<comment type="function">
    <text evidence="2">During stationary phase, binds the chromosome non-specifically, forming a highly ordered and stable dps-DNA co-crystal within which chromosomal DNA is condensed and protected from diverse damages. It protects DNA from oxidative damage by sequestering intracellular Fe(2+) ion and storing it in the form of Fe(3+) oxyhydroxide mineral, which can be released after reduction. One hydrogen peroxide oxidizes two Fe(2+) ions, which prevents hydroxyl radical production by the Fenton reaction.</text>
</comment>
<comment type="catalytic activity">
    <reaction evidence="2">
        <text>2 Fe(2+) + H2O2 + 2 H(+) = 2 Fe(3+) + 2 H2O</text>
        <dbReference type="Rhea" id="RHEA:48712"/>
        <dbReference type="ChEBI" id="CHEBI:15377"/>
        <dbReference type="ChEBI" id="CHEBI:15378"/>
        <dbReference type="ChEBI" id="CHEBI:16240"/>
        <dbReference type="ChEBI" id="CHEBI:29033"/>
        <dbReference type="ChEBI" id="CHEBI:29034"/>
    </reaction>
</comment>
<comment type="subunit">
    <text evidence="2">Homododecamer. The 12 subunits form a hollow sphere into which the mineral iron core of up to 500 Fe(3+) can be deposited.</text>
</comment>
<comment type="subcellular location">
    <subcellularLocation>
        <location evidence="2">Cytoplasm</location>
    </subcellularLocation>
</comment>
<comment type="similarity">
    <text evidence="2">Belongs to the Dps family.</text>
</comment>
<keyword id="KW-0963">Cytoplasm</keyword>
<keyword id="KW-0226">DNA condensation</keyword>
<keyword id="KW-0238">DNA-binding</keyword>
<keyword id="KW-0408">Iron</keyword>
<keyword id="KW-0409">Iron storage</keyword>
<keyword id="KW-0479">Metal-binding</keyword>
<keyword id="KW-0560">Oxidoreductase</keyword>
<feature type="initiator methionine" description="Removed" evidence="1">
    <location>
        <position position="1"/>
    </location>
</feature>
<feature type="chain" id="PRO_0000271591" description="DNA protection during starvation protein">
    <location>
        <begin position="2"/>
        <end position="167"/>
    </location>
</feature>
<feature type="binding site" evidence="2">
    <location>
        <position position="51"/>
    </location>
    <ligand>
        <name>Fe cation</name>
        <dbReference type="ChEBI" id="CHEBI:24875"/>
    </ligand>
</feature>
<feature type="binding site" evidence="2">
    <location>
        <position position="78"/>
    </location>
    <ligand>
        <name>Fe cation</name>
        <dbReference type="ChEBI" id="CHEBI:24875"/>
    </ligand>
</feature>
<feature type="binding site" evidence="2">
    <location>
        <position position="82"/>
    </location>
    <ligand>
        <name>Fe cation</name>
        <dbReference type="ChEBI" id="CHEBI:24875"/>
    </ligand>
</feature>
<gene>
    <name evidence="2" type="primary">dps</name>
    <name type="ordered locus">STY0870</name>
    <name type="ordered locus">t2057</name>
</gene>